<feature type="chain" id="PRO_1000136809" description="tRNA pseudouridine synthase B">
    <location>
        <begin position="1"/>
        <end position="282"/>
    </location>
</feature>
<feature type="active site" description="Nucleophile" evidence="1">
    <location>
        <position position="39"/>
    </location>
</feature>
<reference key="1">
    <citation type="journal article" date="2011" name="J. Bacteriol.">
        <title>Whole-genome sequences of thirteen isolates of Borrelia burgdorferi.</title>
        <authorList>
            <person name="Schutzer S.E."/>
            <person name="Fraser-Liggett C.M."/>
            <person name="Casjens S.R."/>
            <person name="Qiu W.G."/>
            <person name="Dunn J.J."/>
            <person name="Mongodin E.F."/>
            <person name="Luft B.J."/>
        </authorList>
    </citation>
    <scope>NUCLEOTIDE SEQUENCE [LARGE SCALE GENOMIC DNA]</scope>
    <source>
        <strain>ZS7</strain>
    </source>
</reference>
<accession>B7J0P9</accession>
<protein>
    <recommendedName>
        <fullName evidence="1">tRNA pseudouridine synthase B</fullName>
        <ecNumber evidence="1">5.4.99.25</ecNumber>
    </recommendedName>
    <alternativeName>
        <fullName evidence="1">tRNA pseudouridine(55) synthase</fullName>
        <shortName evidence="1">Psi55 synthase</shortName>
    </alternativeName>
    <alternativeName>
        <fullName evidence="1">tRNA pseudouridylate synthase</fullName>
    </alternativeName>
    <alternativeName>
        <fullName evidence="1">tRNA-uridine isomerase</fullName>
    </alternativeName>
</protein>
<organism>
    <name type="scientific">Borreliella burgdorferi (strain ZS7)</name>
    <name type="common">Borrelia burgdorferi</name>
    <dbReference type="NCBI Taxonomy" id="445985"/>
    <lineage>
        <taxon>Bacteria</taxon>
        <taxon>Pseudomonadati</taxon>
        <taxon>Spirochaetota</taxon>
        <taxon>Spirochaetia</taxon>
        <taxon>Spirochaetales</taxon>
        <taxon>Borreliaceae</taxon>
        <taxon>Borreliella</taxon>
    </lineage>
</organism>
<proteinExistence type="inferred from homology"/>
<evidence type="ECO:0000255" key="1">
    <source>
        <dbReference type="HAMAP-Rule" id="MF_01080"/>
    </source>
</evidence>
<dbReference type="EC" id="5.4.99.25" evidence="1"/>
<dbReference type="EMBL" id="CP001205">
    <property type="protein sequence ID" value="ACK74501.1"/>
    <property type="molecule type" value="Genomic_DNA"/>
</dbReference>
<dbReference type="RefSeq" id="WP_002657230.1">
    <property type="nucleotide sequence ID" value="NC_011728.1"/>
</dbReference>
<dbReference type="SMR" id="B7J0P9"/>
<dbReference type="GeneID" id="56567382"/>
<dbReference type="KEGG" id="bbz:BbuZS7_0833"/>
<dbReference type="HOGENOM" id="CLU_032087_0_2_12"/>
<dbReference type="Proteomes" id="UP000006901">
    <property type="component" value="Chromosome"/>
</dbReference>
<dbReference type="GO" id="GO:0003723">
    <property type="term" value="F:RNA binding"/>
    <property type="evidence" value="ECO:0007669"/>
    <property type="project" value="InterPro"/>
</dbReference>
<dbReference type="GO" id="GO:0160148">
    <property type="term" value="F:tRNA pseudouridine(55) synthase activity"/>
    <property type="evidence" value="ECO:0007669"/>
    <property type="project" value="UniProtKB-EC"/>
</dbReference>
<dbReference type="GO" id="GO:1990481">
    <property type="term" value="P:mRNA pseudouridine synthesis"/>
    <property type="evidence" value="ECO:0007669"/>
    <property type="project" value="TreeGrafter"/>
</dbReference>
<dbReference type="GO" id="GO:0031119">
    <property type="term" value="P:tRNA pseudouridine synthesis"/>
    <property type="evidence" value="ECO:0007669"/>
    <property type="project" value="UniProtKB-UniRule"/>
</dbReference>
<dbReference type="CDD" id="cd02573">
    <property type="entry name" value="PseudoU_synth_EcTruB"/>
    <property type="match status" value="1"/>
</dbReference>
<dbReference type="Gene3D" id="3.30.2350.10">
    <property type="entry name" value="Pseudouridine synthase"/>
    <property type="match status" value="1"/>
</dbReference>
<dbReference type="HAMAP" id="MF_01080">
    <property type="entry name" value="TruB_bact"/>
    <property type="match status" value="1"/>
</dbReference>
<dbReference type="InterPro" id="IPR020103">
    <property type="entry name" value="PsdUridine_synth_cat_dom_sf"/>
</dbReference>
<dbReference type="InterPro" id="IPR002501">
    <property type="entry name" value="PsdUridine_synth_N"/>
</dbReference>
<dbReference type="InterPro" id="IPR014780">
    <property type="entry name" value="tRNA_psdUridine_synth_TruB"/>
</dbReference>
<dbReference type="NCBIfam" id="TIGR00431">
    <property type="entry name" value="TruB"/>
    <property type="match status" value="1"/>
</dbReference>
<dbReference type="PANTHER" id="PTHR13767:SF2">
    <property type="entry name" value="PSEUDOURIDYLATE SYNTHASE TRUB1"/>
    <property type="match status" value="1"/>
</dbReference>
<dbReference type="PANTHER" id="PTHR13767">
    <property type="entry name" value="TRNA-PSEUDOURIDINE SYNTHASE"/>
    <property type="match status" value="1"/>
</dbReference>
<dbReference type="Pfam" id="PF01509">
    <property type="entry name" value="TruB_N"/>
    <property type="match status" value="1"/>
</dbReference>
<dbReference type="SUPFAM" id="SSF55120">
    <property type="entry name" value="Pseudouridine synthase"/>
    <property type="match status" value="1"/>
</dbReference>
<comment type="function">
    <text evidence="1">Responsible for synthesis of pseudouridine from uracil-55 in the psi GC loop of transfer RNAs.</text>
</comment>
<comment type="catalytic activity">
    <reaction evidence="1">
        <text>uridine(55) in tRNA = pseudouridine(55) in tRNA</text>
        <dbReference type="Rhea" id="RHEA:42532"/>
        <dbReference type="Rhea" id="RHEA-COMP:10101"/>
        <dbReference type="Rhea" id="RHEA-COMP:10102"/>
        <dbReference type="ChEBI" id="CHEBI:65314"/>
        <dbReference type="ChEBI" id="CHEBI:65315"/>
        <dbReference type="EC" id="5.4.99.25"/>
    </reaction>
</comment>
<comment type="similarity">
    <text evidence="1">Belongs to the pseudouridine synthase TruB family. Type 1 subfamily.</text>
</comment>
<sequence>MENGFLLINKEQGKTSFETLFPIKKYFNTNRVGHAGTLDKFASGILVCLVGKYTKLSGYFTSLDKEYVAEFRFGLETDTLDPNGRIVSKTDYIPNVEDIDLKLKDFVGEIYQSPPRFSSVHIDGSRAYKLALNGKFFEIKKRKVTVYNIQRLSYDFSSSLLSLKISCSKGTYIRSIARDLAYSLNSCAYVSNLKRTKVGMFRLKDSTLCENLSKASLISLESLKSFEKVYIDSNKINLVKNGVYFEIEININEFKILKSREEKILAVIQGVGLNKYKYVIIF</sequence>
<gene>
    <name evidence="1" type="primary">truB</name>
    <name type="ordered locus">BbuZS7_0833</name>
</gene>
<name>TRUB_BORBZ</name>
<keyword id="KW-0413">Isomerase</keyword>
<keyword id="KW-0819">tRNA processing</keyword>